<proteinExistence type="evidence at protein level"/>
<protein>
    <recommendedName>
        <fullName>Alpha-1,3-galactosidase A</fullName>
        <ecNumber evidence="2">3.2.1.n1</ecNumber>
    </recommendedName>
    <alternativeName>
        <fullName>Exo-alpha-galactosidase A</fullName>
        <ecNumber evidence="2">3.2.1.22</ecNumber>
    </alternativeName>
    <alternativeName>
        <fullName>SgGal110A</fullName>
    </alternativeName>
</protein>
<dbReference type="EC" id="3.2.1.n1" evidence="2"/>
<dbReference type="EC" id="3.2.1.22" evidence="2"/>
<dbReference type="EMBL" id="AM259273">
    <property type="protein sequence ID" value="CAJ90659.1"/>
    <property type="molecule type" value="Genomic_DNA"/>
</dbReference>
<dbReference type="SMR" id="B1V8K7"/>
<dbReference type="CAZy" id="GH110">
    <property type="family name" value="Glycoside Hydrolase Family 110"/>
</dbReference>
<dbReference type="GO" id="GO:0004557">
    <property type="term" value="F:alpha-galactosidase activity"/>
    <property type="evidence" value="ECO:0007669"/>
    <property type="project" value="UniProtKB-EC"/>
</dbReference>
<dbReference type="Gene3D" id="2.160.20.10">
    <property type="entry name" value="Single-stranded right-handed beta-helix, Pectin lyase-like"/>
    <property type="match status" value="2"/>
</dbReference>
<dbReference type="InterPro" id="IPR056441">
    <property type="entry name" value="Beta-barrel_GLAA-B_II"/>
</dbReference>
<dbReference type="InterPro" id="IPR039448">
    <property type="entry name" value="Beta_helix"/>
</dbReference>
<dbReference type="InterPro" id="IPR008964">
    <property type="entry name" value="Invasin/intimin_cell_adhesion"/>
</dbReference>
<dbReference type="InterPro" id="IPR006626">
    <property type="entry name" value="PbH1"/>
</dbReference>
<dbReference type="InterPro" id="IPR012334">
    <property type="entry name" value="Pectin_lyas_fold"/>
</dbReference>
<dbReference type="InterPro" id="IPR011050">
    <property type="entry name" value="Pectin_lyase_fold/virulence"/>
</dbReference>
<dbReference type="InterPro" id="IPR024535">
    <property type="entry name" value="RHGA/B-epi-like_pectate_lyase"/>
</dbReference>
<dbReference type="Pfam" id="PF23764">
    <property type="entry name" value="Beta-barrel_GLAA-B_II"/>
    <property type="match status" value="1"/>
</dbReference>
<dbReference type="Pfam" id="PF13229">
    <property type="entry name" value="Beta_helix"/>
    <property type="match status" value="1"/>
</dbReference>
<dbReference type="Pfam" id="PF12708">
    <property type="entry name" value="Pect-lyase_RHGA_epim"/>
    <property type="match status" value="1"/>
</dbReference>
<dbReference type="SMART" id="SM00710">
    <property type="entry name" value="PbH1"/>
    <property type="match status" value="6"/>
</dbReference>
<dbReference type="SUPFAM" id="SSF49373">
    <property type="entry name" value="Invasin/intimin cell-adhesion fragments"/>
    <property type="match status" value="1"/>
</dbReference>
<dbReference type="SUPFAM" id="SSF51126">
    <property type="entry name" value="Pectin lyase-like"/>
    <property type="match status" value="1"/>
</dbReference>
<comment type="function">
    <text>Alpha-galactosidase that specifically removes branched alpha-1,3-linked galactose residues present in blood group B antigens. Has no activity toward linear alpha-1,3-linked galactose residues.</text>
</comment>
<comment type="catalytic activity">
    <reaction evidence="2">
        <text>Hydrolysis of terminal, non-reducing branched (1-&gt;3)-alpha-D-galactosidic residues, producing free D-galactose.</text>
        <dbReference type="EC" id="3.2.1.n1"/>
    </reaction>
</comment>
<comment type="catalytic activity">
    <reaction evidence="2">
        <text>Hydrolysis of terminal, non-reducing alpha-D-galactose residues in alpha-D-galactosides, including galactose oligosaccharides, galactomannans and galactolipids.</text>
        <dbReference type="EC" id="3.2.1.22"/>
    </reaction>
</comment>
<comment type="biotechnology">
    <text>Specifically cleaves the branched blood group B antigen at neutral pH with low consumption of recombinant enzyme. It is therefore a good candidate to participate in the development of universal red blood cells by removing blood group B antigen.</text>
</comment>
<comment type="similarity">
    <text evidence="3">Belongs to the glycosyl hydrolase 110 family. A subfamily.</text>
</comment>
<comment type="online information" name="Protein Spotlight">
    <link uri="https://www.proteinspotlight.org/back_issues/098"/>
    <text>The juice of life - Issue 98 of October 2008</text>
</comment>
<evidence type="ECO:0000256" key="1">
    <source>
        <dbReference type="SAM" id="MobiDB-lite"/>
    </source>
</evidence>
<evidence type="ECO:0000269" key="2">
    <source>
    </source>
</evidence>
<evidence type="ECO:0000305" key="3"/>
<accession>B1V8K7</accession>
<organism>
    <name type="scientific">Peterkaempfera griseoplana</name>
    <name type="common">Streptacidiphilus griseoplanus</name>
    <dbReference type="NCBI Taxonomy" id="66896"/>
    <lineage>
        <taxon>Bacteria</taxon>
        <taxon>Bacillati</taxon>
        <taxon>Actinomycetota</taxon>
        <taxon>Actinomycetes</taxon>
        <taxon>Kitasatosporales</taxon>
        <taxon>Streptomycetaceae</taxon>
        <taxon>Peterkaempfera</taxon>
    </lineage>
</organism>
<gene>
    <name type="primary">glaA</name>
    <name type="synonym">gla</name>
</gene>
<name>GLAA_PETGR</name>
<sequence length="727" mass="78244">MGTATAQPALRPQTSTVIGGLHGAAVLDNTGRTVIDVTDFGADPSGKADSAAAVSAAMAHAKTVGGPTTLHFPTGTYHIWPERTPKRELYVSNTVGSDQAFRTKNIGILVEDMRDVVVDGGGSRIVNHGFQTVFAAIRSSDVRFTNFSQTWVAPKTVDITVADAGVVSGQAYRIIDIPETYDYAVEGTSVRWNGERGPATGQPYWTGTNSFDYSQVHDPATNRTWRTSNPVFPERHEDHRPRRRQVRITYGDSTAPGDRGYVYQMREVTRDTPGALFWESSRVTVDHLRLGYLHGFGIVGQLSEDIGIDSVTFKADRGSGRVTSGFADHIQMSGVKGTVRITNSVFDNPQDDPINIHGTYLQATAAERETLQLRYMHNETSGFPQFYPGDTIELVDKRTMLAAPGATAKVVSVTGPTGSGVPAGTDPDTYLRTMTVVLDRTLPAAVLAAPGDYVAENTTYTPTVEITGNTFQAVPTRGILVTTRRPVRIENNRFDGMSMASIYISSDARSWYESGPVRNVTIRGNVFDRPASPVIFFDPTNQDFVAGQPVHRNVLIEDNDFNLTGGTILSGRGVGGLTFRDNRVERYPHLRLTGPSRALRVGDTTTVTTDAPPPSHTSPLFTFDGADDITLANNTYGNGFNKRVNTANMDVSEITVTADGLALNADSISSAPVAVSYSSSRPKVATVDSEGVVKALSGGTTSITARATIGGVRVTSNPVKVVVATER</sequence>
<keyword id="KW-0903">Direct protein sequencing</keyword>
<keyword id="KW-0326">Glycosidase</keyword>
<keyword id="KW-0378">Hydrolase</keyword>
<keyword id="KW-0677">Repeat</keyword>
<reference key="1">
    <citation type="journal article" date="2008" name="J. Biol. Chem.">
        <title>Identification of a GH110 subfamily of alpha1,3-galactosidases: novel enzymes for removal of the alpha3Gal xenotransplantation antigen.</title>
        <authorList>
            <person name="Liu Q.P."/>
            <person name="Yuan H."/>
            <person name="Bennett E.P."/>
            <person name="Levery S.B."/>
            <person name="Nudelman E."/>
            <person name="Spence J."/>
            <person name="Pietz G."/>
            <person name="Saunders K."/>
            <person name="White T."/>
            <person name="Olsson M.L."/>
            <person name="Henrissat B."/>
            <person name="Sulzenbacher G."/>
            <person name="Clausen H."/>
        </authorList>
    </citation>
    <scope>NUCLEOTIDE SEQUENCE [GENOMIC DNA]</scope>
    <scope>ENZYME ACTIVITY</scope>
</reference>
<reference key="2">
    <citation type="journal article" date="2007" name="Nat. Biotechnol.">
        <title>Bacterial glycosidases for the production of universal red blood cells.</title>
        <authorList>
            <person name="Liu Q.P."/>
            <person name="Sulzenbacher G."/>
            <person name="Yuan H."/>
            <person name="Bennett E.P."/>
            <person name="Pietz G."/>
            <person name="Saunders K."/>
            <person name="Spence J."/>
            <person name="Nudelman E."/>
            <person name="Levery S.B."/>
            <person name="White T."/>
            <person name="Neveu J.M."/>
            <person name="Lane W.S."/>
            <person name="Bourne Y."/>
            <person name="Olsson M.L."/>
            <person name="Henrissat B."/>
            <person name="Clausen H."/>
        </authorList>
    </citation>
    <scope>PROTEIN SEQUENCE OF 34-77; 144-153; 273-280 AND 489-497</scope>
    <scope>CATALYTIC ACTIVITY</scope>
</reference>
<feature type="chain" id="PRO_0000348460" description="Alpha-1,3-galactosidase A">
    <location>
        <begin position="1"/>
        <end position="727"/>
    </location>
</feature>
<feature type="repeat" description="PbH1 1">
    <location>
        <begin position="336"/>
        <end position="358"/>
    </location>
</feature>
<feature type="repeat" description="PbH1 2">
    <location>
        <begin position="461"/>
        <end position="483"/>
    </location>
</feature>
<feature type="repeat" description="PbH1 3">
    <location>
        <begin position="484"/>
        <end position="506"/>
    </location>
</feature>
<feature type="repeat" description="PbH1 4">
    <location>
        <begin position="517"/>
        <end position="538"/>
    </location>
</feature>
<feature type="repeat" description="PbH1 5">
    <location>
        <begin position="551"/>
        <end position="572"/>
    </location>
</feature>
<feature type="repeat" description="PbH1 6">
    <location>
        <begin position="574"/>
        <end position="603"/>
    </location>
</feature>
<feature type="region of interest" description="Disordered" evidence="1">
    <location>
        <begin position="220"/>
        <end position="241"/>
    </location>
</feature>
<feature type="compositionally biased region" description="Polar residues" evidence="1">
    <location>
        <begin position="221"/>
        <end position="230"/>
    </location>
</feature>
<feature type="sequence conflict" description="In Ref. 2; AA sequence." evidence="3" ref="2">
    <original>G</original>
    <variation>I</variation>
    <location>
        <position position="66"/>
    </location>
</feature>
<feature type="sequence conflict" description="In Ref. 2; AA sequence." evidence="3" ref="2">
    <original>T</original>
    <variation>G</variation>
    <location>
        <position position="76"/>
    </location>
</feature>
<feature type="sequence conflict" description="In Ref. 2; AA sequence." evidence="3" ref="2">
    <original>N</original>
    <variation>S</variation>
    <location>
        <position position="492"/>
    </location>
</feature>
<feature type="sequence conflict" description="In Ref. 2; AA sequence." evidence="3" ref="2">
    <original>G</original>
    <variation>D</variation>
    <location>
        <position position="496"/>
    </location>
</feature>